<organism>
    <name type="scientific">Methanococcus maripaludis (strain C7 / ATCC BAA-1331)</name>
    <dbReference type="NCBI Taxonomy" id="426368"/>
    <lineage>
        <taxon>Archaea</taxon>
        <taxon>Methanobacteriati</taxon>
        <taxon>Methanobacteriota</taxon>
        <taxon>Methanomada group</taxon>
        <taxon>Methanococci</taxon>
        <taxon>Methanococcales</taxon>
        <taxon>Methanococcaceae</taxon>
        <taxon>Methanococcus</taxon>
    </lineage>
</organism>
<reference key="1">
    <citation type="submission" date="2007-06" db="EMBL/GenBank/DDBJ databases">
        <title>Complete sequence of Methanococcus maripaludis C7.</title>
        <authorList>
            <consortium name="US DOE Joint Genome Institute"/>
            <person name="Copeland A."/>
            <person name="Lucas S."/>
            <person name="Lapidus A."/>
            <person name="Barry K."/>
            <person name="Glavina del Rio T."/>
            <person name="Dalin E."/>
            <person name="Tice H."/>
            <person name="Pitluck S."/>
            <person name="Clum A."/>
            <person name="Schmutz J."/>
            <person name="Larimer F."/>
            <person name="Land M."/>
            <person name="Hauser L."/>
            <person name="Kyrpides N."/>
            <person name="Anderson I."/>
            <person name="Sieprawska-Lupa M."/>
            <person name="Whitman W.B."/>
            <person name="Richardson P."/>
        </authorList>
    </citation>
    <scope>NUCLEOTIDE SEQUENCE [LARGE SCALE GENOMIC DNA]</scope>
    <source>
        <strain>C7 / ATCC BAA-1331</strain>
    </source>
</reference>
<sequence length="380" mass="43313">MDINTDKYKNITRNLEREMINLNPIQRGGIIPTEAKKIIYEYWDGYSVCDYCSGRLDQIETPPINEFLEDMSKFLGMDITRPTHGARESKYAVMNSICKEGDYVVLDGNAHYTSYVALERAKLNYEKTEIEEYPTFRVIPESYAEKIDLLEDSKKNIGLILLTHVDGNYGNVADVEKVGKIAKSKGYPFLLNCAYSAGRMPIDGKKLNVDFIAASGHKSMAASGPCGLLSINKKYEDEVLETSKVNVVKELQMLGCTSRGIPILSLMASFEHLIERVKKWDLEVEKTRKVVNELEPLGFNQIGEKPRNHDIIRFETPILDKIAEKDKRRGFFFYEELKKRGIGGIRRGVTKEFKMSVYGLTNVQVDYVINSMKSIINELR</sequence>
<keyword id="KW-0648">Protein biosynthesis</keyword>
<keyword id="KW-0663">Pyridoxal phosphate</keyword>
<keyword id="KW-0808">Transferase</keyword>
<dbReference type="EC" id="2.5.1.73" evidence="1"/>
<dbReference type="EMBL" id="CP000745">
    <property type="protein sequence ID" value="ABR65555.1"/>
    <property type="molecule type" value="Genomic_DNA"/>
</dbReference>
<dbReference type="SMR" id="A6VGH9"/>
<dbReference type="STRING" id="426368.MmarC7_0486"/>
<dbReference type="KEGG" id="mmz:MmarC7_0486"/>
<dbReference type="eggNOG" id="arCOG00091">
    <property type="taxonomic scope" value="Archaea"/>
</dbReference>
<dbReference type="HOGENOM" id="CLU_060476_0_0_2"/>
<dbReference type="OrthoDB" id="5817at2157"/>
<dbReference type="GO" id="GO:0043766">
    <property type="term" value="F:Sep-tRNA:Cys-tRNA synthase activity"/>
    <property type="evidence" value="ECO:0007669"/>
    <property type="project" value="UniProtKB-UniRule"/>
</dbReference>
<dbReference type="GO" id="GO:0006412">
    <property type="term" value="P:translation"/>
    <property type="evidence" value="ECO:0007669"/>
    <property type="project" value="UniProtKB-KW"/>
</dbReference>
<dbReference type="Gene3D" id="3.90.1150.10">
    <property type="entry name" value="Aspartate Aminotransferase, domain 1"/>
    <property type="match status" value="1"/>
</dbReference>
<dbReference type="Gene3D" id="3.40.640.10">
    <property type="entry name" value="Type I PLP-dependent aspartate aminotransferase-like (Major domain)"/>
    <property type="match status" value="1"/>
</dbReference>
<dbReference type="HAMAP" id="MF_01675">
    <property type="entry name" value="Sep_Cys_tRNA_synth"/>
    <property type="match status" value="1"/>
</dbReference>
<dbReference type="InterPro" id="IPR015424">
    <property type="entry name" value="PyrdxlP-dep_Trfase"/>
</dbReference>
<dbReference type="InterPro" id="IPR015421">
    <property type="entry name" value="PyrdxlP-dep_Trfase_major"/>
</dbReference>
<dbReference type="InterPro" id="IPR015422">
    <property type="entry name" value="PyrdxlP-dep_Trfase_small"/>
</dbReference>
<dbReference type="InterPro" id="IPR013375">
    <property type="entry name" value="Sep_Cys-tRNA_synth_arc"/>
</dbReference>
<dbReference type="InterPro" id="IPR008829">
    <property type="entry name" value="SepSecS/SepCysS"/>
</dbReference>
<dbReference type="NCBIfam" id="NF006810">
    <property type="entry name" value="PRK09331.1"/>
    <property type="match status" value="1"/>
</dbReference>
<dbReference type="NCBIfam" id="TIGR02539">
    <property type="entry name" value="SepCysS"/>
    <property type="match status" value="1"/>
</dbReference>
<dbReference type="PANTHER" id="PTHR43586">
    <property type="entry name" value="CYSTEINE DESULFURASE"/>
    <property type="match status" value="1"/>
</dbReference>
<dbReference type="PANTHER" id="PTHR43586:SF3">
    <property type="entry name" value="O-PHOSPHO-L-SERYL-TRNA:CYS-TRNA SYNTHASE"/>
    <property type="match status" value="1"/>
</dbReference>
<dbReference type="Pfam" id="PF05889">
    <property type="entry name" value="SepSecS"/>
    <property type="match status" value="1"/>
</dbReference>
<dbReference type="SUPFAM" id="SSF53383">
    <property type="entry name" value="PLP-dependent transferases"/>
    <property type="match status" value="1"/>
</dbReference>
<accession>A6VGH9</accession>
<evidence type="ECO:0000255" key="1">
    <source>
        <dbReference type="HAMAP-Rule" id="MF_01675"/>
    </source>
</evidence>
<proteinExistence type="inferred from homology"/>
<feature type="chain" id="PRO_0000359451" description="O-phospho-L-seryl-tRNA:Cys-tRNA synthase">
    <location>
        <begin position="1"/>
        <end position="380"/>
    </location>
</feature>
<feature type="binding site" evidence="1">
    <location>
        <begin position="86"/>
        <end position="87"/>
    </location>
    <ligand>
        <name>pyridoxal 5'-phosphate</name>
        <dbReference type="ChEBI" id="CHEBI:597326"/>
    </ligand>
</feature>
<feature type="binding site" evidence="1">
    <location>
        <position position="192"/>
    </location>
    <ligand>
        <name>pyridoxal 5'-phosphate</name>
        <dbReference type="ChEBI" id="CHEBI:597326"/>
    </ligand>
</feature>
<feature type="binding site" evidence="1">
    <location>
        <begin position="215"/>
        <end position="217"/>
    </location>
    <ligand>
        <name>pyridoxal 5'-phosphate</name>
        <dbReference type="ChEBI" id="CHEBI:597326"/>
    </ligand>
</feature>
<feature type="modified residue" description="N6-(pyridoxal phosphate)lysine" evidence="1">
    <location>
        <position position="218"/>
    </location>
</feature>
<protein>
    <recommendedName>
        <fullName evidence="1">O-phospho-L-seryl-tRNA:Cys-tRNA synthase</fullName>
        <ecNumber evidence="1">2.5.1.73</ecNumber>
    </recommendedName>
    <alternativeName>
        <fullName evidence="1">Sep-tRNA:Cys-tRNA synthase</fullName>
        <shortName evidence="1">SepCysS</shortName>
    </alternativeName>
</protein>
<comment type="function">
    <text evidence="1">Converts O-phospho-L-seryl-tRNA(Cys) (Sep-tRNA(Cys)) to L-cysteinyl-tRNA(Cys) (Cys-tRNA(Cys)).</text>
</comment>
<comment type="catalytic activity">
    <reaction evidence="1">
        <text>O-phospho-L-seryl-tRNA(Cys) + hydrogen sulfide + H(+) = L-cysteinyl-tRNA(Cys) + phosphate</text>
        <dbReference type="Rhea" id="RHEA:25686"/>
        <dbReference type="Rhea" id="RHEA-COMP:9679"/>
        <dbReference type="Rhea" id="RHEA-COMP:9719"/>
        <dbReference type="ChEBI" id="CHEBI:15378"/>
        <dbReference type="ChEBI" id="CHEBI:29919"/>
        <dbReference type="ChEBI" id="CHEBI:43474"/>
        <dbReference type="ChEBI" id="CHEBI:78517"/>
        <dbReference type="ChEBI" id="CHEBI:78551"/>
        <dbReference type="EC" id="2.5.1.73"/>
    </reaction>
</comment>
<comment type="cofactor">
    <cofactor evidence="1">
        <name>pyridoxal 5'-phosphate</name>
        <dbReference type="ChEBI" id="CHEBI:597326"/>
    </cofactor>
</comment>
<comment type="subunit">
    <text evidence="1">Homodimer. Interacts with SepRS.</text>
</comment>
<comment type="similarity">
    <text evidence="1">Belongs to the SepCysS family.</text>
</comment>
<gene>
    <name type="ordered locus">MmarC7_0486</name>
</gene>
<name>SPSS_METM7</name>